<comment type="function">
    <text>Structural protein that is specific for occlusion-derived virus (ODV) envelopes but not of budded virus (BV).</text>
</comment>
<comment type="subcellular location">
    <subcellularLocation>
        <location evidence="3">Virion membrane</location>
        <topology evidence="3">Multi-pass membrane protein</topology>
    </subcellularLocation>
    <text>Localized to the envelope region of preoccluded bundles of virions.</text>
</comment>
<comment type="miscellaneous">
    <text>Expressed late in infection (18 hours post-infection). It remains detectable up to 120 hours p.i.</text>
</comment>
<comment type="similarity">
    <text evidence="3">Belongs to the baculoviridae E56 family.</text>
</comment>
<sequence>MSFFTNLRRVNKVYPDSASFIVDNRLLLNTTPAGFTNVLNVPSTRNLGNGRFEPGYNLSNNQFVSAGDINRITRSNDVPRIRGVFQGISDPQIGSLNQLRRVDNVPDANLHVKRTRGDAVKQSFPETNVRSAEGVDRALQQNPRLNTYLQGAKAAGVGVLLAGGAYLTFSAATLVQDIIRALNNTGGSYYVRGSDGGETADACLLLHRTCQRDPNMNTSEVAICANDPLVSNTAQLQAICSGFNYEQEQTVCRQSDPAADPDSPQFVDVSDLLPGQTIMCIEPYSLGDLIGDLGLDHLLGEEGLVGKSSNSSDSVSNKLMPLIWLIGAVLFLALVVYLIYRFLIKGGGSSTTNAPPVVIVPPPATTNLNPQQQI</sequence>
<dbReference type="EMBL" id="U44895">
    <property type="protein sequence ID" value="AAB02399.1"/>
    <property type="molecule type" value="Genomic_DNA"/>
</dbReference>
<dbReference type="EMBL" id="U75930">
    <property type="protein sequence ID" value="AAC59145.1"/>
    <property type="molecule type" value="Genomic_DNA"/>
</dbReference>
<dbReference type="RefSeq" id="NP_046302.1">
    <property type="nucleotide sequence ID" value="NC_001875.2"/>
</dbReference>
<dbReference type="SMR" id="Q83953"/>
<dbReference type="GlyCosmos" id="Q83953">
    <property type="glycosylation" value="1 site, No reported glycans"/>
</dbReference>
<dbReference type="KEGG" id="vg:912108"/>
<dbReference type="OrthoDB" id="8860at10239"/>
<dbReference type="Proteomes" id="UP000009248">
    <property type="component" value="Genome"/>
</dbReference>
<dbReference type="GO" id="GO:0016020">
    <property type="term" value="C:membrane"/>
    <property type="evidence" value="ECO:0007669"/>
    <property type="project" value="UniProtKB-KW"/>
</dbReference>
<dbReference type="GO" id="GO:0019031">
    <property type="term" value="C:viral envelope"/>
    <property type="evidence" value="ECO:0007669"/>
    <property type="project" value="UniProtKB-KW"/>
</dbReference>
<dbReference type="GO" id="GO:0055036">
    <property type="term" value="C:virion membrane"/>
    <property type="evidence" value="ECO:0007669"/>
    <property type="project" value="UniProtKB-SubCell"/>
</dbReference>
<dbReference type="InterPro" id="IPR006733">
    <property type="entry name" value="Baculo_ODV-E56"/>
</dbReference>
<dbReference type="Pfam" id="PF04639">
    <property type="entry name" value="Baculo_E56"/>
    <property type="match status" value="1"/>
</dbReference>
<reference key="1">
    <citation type="journal article" date="1996" name="Virology">
        <title>Characterization of a highly conserved baculovirus structural protein that is specific for occlusion-derived virions.</title>
        <authorList>
            <person name="Theilmann D.A."/>
            <person name="Chantler J.K."/>
            <person name="Stewart S."/>
            <person name="Flipsen H.T.M."/>
            <person name="Vlak J.M."/>
            <person name="Crook N.E."/>
        </authorList>
    </citation>
    <scope>NUCLEOTIDE SEQUENCE [GENOMIC DNA]</scope>
</reference>
<reference key="2">
    <citation type="journal article" date="1997" name="Virology">
        <title>The sequence of the Orgyia pseudotsugata multinucleocapsid nuclear polyhedrosis virus genome.</title>
        <authorList>
            <person name="Ahrens C.H."/>
            <person name="Russell R.R."/>
            <person name="Funk C.J."/>
            <person name="Evans J."/>
            <person name="Harwood S."/>
            <person name="Rohrmann G.F."/>
        </authorList>
    </citation>
    <scope>NUCLEOTIDE SEQUENCE [LARGE SCALE GENOMIC DNA]</scope>
</reference>
<organismHost>
    <name type="scientific">Orgyia pseudotsugata</name>
    <name type="common">Douglas-fir tussock moth</name>
    <dbReference type="NCBI Taxonomy" id="33414"/>
</organismHost>
<accession>Q83953</accession>
<accession>O12559</accession>
<accession>O12848</accession>
<proteinExistence type="inferred from homology"/>
<keyword id="KW-0325">Glycoprotein</keyword>
<keyword id="KW-0426">Late protein</keyword>
<keyword id="KW-0472">Membrane</keyword>
<keyword id="KW-1185">Reference proteome</keyword>
<keyword id="KW-0812">Transmembrane</keyword>
<keyword id="KW-1133">Transmembrane helix</keyword>
<keyword id="KW-0261">Viral envelope protein</keyword>
<keyword id="KW-0946">Virion</keyword>
<gene>
    <name type="primary">ODVP6E</name>
    <name type="ORF">ORF146</name>
</gene>
<feature type="chain" id="PRO_0000132925" description="Occlusion-derived virus envelope protein E56">
    <location>
        <begin position="1"/>
        <end position="374"/>
    </location>
</feature>
<feature type="transmembrane region" description="Helical" evidence="1">
    <location>
        <begin position="155"/>
        <end position="175"/>
    </location>
</feature>
<feature type="transmembrane region" description="Helical" evidence="1">
    <location>
        <begin position="319"/>
        <end position="339"/>
    </location>
</feature>
<feature type="region of interest" description="Disordered" evidence="2">
    <location>
        <begin position="355"/>
        <end position="374"/>
    </location>
</feature>
<feature type="glycosylation site" description="N-linked (GlcNAc...) asparagine; by host" evidence="1">
    <location>
        <position position="183"/>
    </location>
</feature>
<protein>
    <recommendedName>
        <fullName>Occlusion-derived virus envelope protein E56</fullName>
        <shortName>ODV-E56</shortName>
    </recommendedName>
    <alternativeName>
        <fullName>ODVP-6E</fullName>
    </alternativeName>
</protein>
<organism>
    <name type="scientific">Orgyia pseudotsugata multicapsid polyhedrosis virus</name>
    <name type="common">OpMNPV</name>
    <dbReference type="NCBI Taxonomy" id="262177"/>
    <lineage>
        <taxon>Viruses</taxon>
        <taxon>Viruses incertae sedis</taxon>
        <taxon>Naldaviricetes</taxon>
        <taxon>Lefavirales</taxon>
        <taxon>Baculoviridae</taxon>
        <taxon>Alphabaculovirus</taxon>
        <taxon>Alphabaculovirus orpseudotsugatae</taxon>
    </lineage>
</organism>
<name>OE56_NPVOP</name>
<evidence type="ECO:0000255" key="1"/>
<evidence type="ECO:0000256" key="2">
    <source>
        <dbReference type="SAM" id="MobiDB-lite"/>
    </source>
</evidence>
<evidence type="ECO:0000305" key="3"/>